<name>RL13_CUTAK</name>
<organism>
    <name type="scientific">Cutibacterium acnes (strain DSM 16379 / KPA171202)</name>
    <name type="common">Propionibacterium acnes</name>
    <dbReference type="NCBI Taxonomy" id="267747"/>
    <lineage>
        <taxon>Bacteria</taxon>
        <taxon>Bacillati</taxon>
        <taxon>Actinomycetota</taxon>
        <taxon>Actinomycetes</taxon>
        <taxon>Propionibacteriales</taxon>
        <taxon>Propionibacteriaceae</taxon>
        <taxon>Cutibacterium</taxon>
    </lineage>
</organism>
<proteinExistence type="evidence at protein level"/>
<gene>
    <name evidence="1" type="primary">rplM</name>
    <name type="ordered locus">PPA1803</name>
</gene>
<comment type="function">
    <text evidence="1">This protein is one of the early assembly proteins of the 50S ribosomal subunit, although it is not seen to bind rRNA by itself. It is important during the early stages of 50S assembly.</text>
</comment>
<comment type="subunit">
    <text evidence="1">Part of the 50S ribosomal subunit.</text>
</comment>
<comment type="similarity">
    <text evidence="1">Belongs to the universal ribosomal protein uL13 family.</text>
</comment>
<protein>
    <recommendedName>
        <fullName evidence="1">Large ribosomal subunit protein uL13</fullName>
    </recommendedName>
    <alternativeName>
        <fullName evidence="3">50S ribosomal protein L13</fullName>
    </alternativeName>
</protein>
<feature type="chain" id="PRO_1000055433" description="Large ribosomal subunit protein uL13">
    <location>
        <begin position="1"/>
        <end position="147"/>
    </location>
</feature>
<feature type="region of interest" description="Disordered" evidence="2">
    <location>
        <begin position="126"/>
        <end position="147"/>
    </location>
</feature>
<feature type="strand" evidence="4">
    <location>
        <begin position="15"/>
        <end position="19"/>
    </location>
</feature>
<feature type="helix" evidence="4">
    <location>
        <begin position="25"/>
        <end position="37"/>
    </location>
</feature>
<feature type="turn" evidence="4">
    <location>
        <begin position="38"/>
        <end position="40"/>
    </location>
</feature>
<feature type="strand" evidence="4">
    <location>
        <begin position="53"/>
        <end position="57"/>
    </location>
</feature>
<feature type="helix" evidence="4">
    <location>
        <begin position="59"/>
        <end position="61"/>
    </location>
</feature>
<feature type="helix" evidence="4">
    <location>
        <begin position="68"/>
        <end position="71"/>
    </location>
</feature>
<feature type="strand" evidence="4">
    <location>
        <begin position="72"/>
        <end position="77"/>
    </location>
</feature>
<feature type="strand" evidence="4">
    <location>
        <begin position="84"/>
        <end position="88"/>
    </location>
</feature>
<feature type="helix" evidence="4">
    <location>
        <begin position="89"/>
        <end position="95"/>
    </location>
</feature>
<feature type="helix" evidence="4">
    <location>
        <begin position="97"/>
        <end position="108"/>
    </location>
</feature>
<feature type="helix" evidence="4">
    <location>
        <begin position="113"/>
        <end position="119"/>
    </location>
</feature>
<feature type="strand" evidence="4">
    <location>
        <begin position="122"/>
        <end position="124"/>
    </location>
</feature>
<feature type="strand" evidence="4">
    <location>
        <begin position="126"/>
        <end position="128"/>
    </location>
</feature>
<feature type="turn" evidence="4">
    <location>
        <begin position="133"/>
        <end position="135"/>
    </location>
</feature>
<evidence type="ECO:0000255" key="1">
    <source>
        <dbReference type="HAMAP-Rule" id="MF_01366"/>
    </source>
</evidence>
<evidence type="ECO:0000256" key="2">
    <source>
        <dbReference type="SAM" id="MobiDB-lite"/>
    </source>
</evidence>
<evidence type="ECO:0000305" key="3"/>
<evidence type="ECO:0007829" key="4">
    <source>
        <dbReference type="PDB" id="8CVM"/>
    </source>
</evidence>
<accession>Q6A6T3</accession>
<reference key="1">
    <citation type="journal article" date="2004" name="Science">
        <title>The complete genome sequence of Propionibacterium acnes, a commensal of human skin.</title>
        <authorList>
            <person name="Brueggemann H."/>
            <person name="Henne A."/>
            <person name="Hoster F."/>
            <person name="Liesegang H."/>
            <person name="Wiezer A."/>
            <person name="Strittmatter A."/>
            <person name="Hujer S."/>
            <person name="Duerre P."/>
            <person name="Gottschalk G."/>
        </authorList>
    </citation>
    <scope>NUCLEOTIDE SEQUENCE [LARGE SCALE GENOMIC DNA]</scope>
    <source>
        <strain>DSM 16379 / KPA171202</strain>
    </source>
</reference>
<dbReference type="EMBL" id="AE017283">
    <property type="protein sequence ID" value="AAT83530.1"/>
    <property type="molecule type" value="Genomic_DNA"/>
</dbReference>
<dbReference type="RefSeq" id="WP_011183929.1">
    <property type="nucleotide sequence ID" value="NC_006085.1"/>
</dbReference>
<dbReference type="PDB" id="8CVM">
    <property type="method" value="EM"/>
    <property type="resolution" value="2.66 A"/>
    <property type="chains" value="i=1-147"/>
</dbReference>
<dbReference type="PDBsum" id="8CVM"/>
<dbReference type="SMR" id="Q6A6T3"/>
<dbReference type="EnsemblBacteria" id="AAT83530">
    <property type="protein sequence ID" value="AAT83530"/>
    <property type="gene ID" value="PPA1803"/>
</dbReference>
<dbReference type="KEGG" id="pac:PPA1803"/>
<dbReference type="PATRIC" id="fig|267747.3.peg.1862"/>
<dbReference type="eggNOG" id="COG0102">
    <property type="taxonomic scope" value="Bacteria"/>
</dbReference>
<dbReference type="HOGENOM" id="CLU_082184_2_2_11"/>
<dbReference type="Proteomes" id="UP000000603">
    <property type="component" value="Chromosome"/>
</dbReference>
<dbReference type="GO" id="GO:0022625">
    <property type="term" value="C:cytosolic large ribosomal subunit"/>
    <property type="evidence" value="ECO:0007669"/>
    <property type="project" value="TreeGrafter"/>
</dbReference>
<dbReference type="GO" id="GO:0003729">
    <property type="term" value="F:mRNA binding"/>
    <property type="evidence" value="ECO:0007669"/>
    <property type="project" value="TreeGrafter"/>
</dbReference>
<dbReference type="GO" id="GO:0003735">
    <property type="term" value="F:structural constituent of ribosome"/>
    <property type="evidence" value="ECO:0007669"/>
    <property type="project" value="InterPro"/>
</dbReference>
<dbReference type="GO" id="GO:0017148">
    <property type="term" value="P:negative regulation of translation"/>
    <property type="evidence" value="ECO:0007669"/>
    <property type="project" value="TreeGrafter"/>
</dbReference>
<dbReference type="GO" id="GO:0006412">
    <property type="term" value="P:translation"/>
    <property type="evidence" value="ECO:0007669"/>
    <property type="project" value="UniProtKB-UniRule"/>
</dbReference>
<dbReference type="CDD" id="cd00392">
    <property type="entry name" value="Ribosomal_L13"/>
    <property type="match status" value="1"/>
</dbReference>
<dbReference type="FunFam" id="3.90.1180.10:FF:000001">
    <property type="entry name" value="50S ribosomal protein L13"/>
    <property type="match status" value="1"/>
</dbReference>
<dbReference type="Gene3D" id="3.90.1180.10">
    <property type="entry name" value="Ribosomal protein L13"/>
    <property type="match status" value="1"/>
</dbReference>
<dbReference type="HAMAP" id="MF_01366">
    <property type="entry name" value="Ribosomal_uL13"/>
    <property type="match status" value="1"/>
</dbReference>
<dbReference type="InterPro" id="IPR005822">
    <property type="entry name" value="Ribosomal_uL13"/>
</dbReference>
<dbReference type="InterPro" id="IPR005823">
    <property type="entry name" value="Ribosomal_uL13_bac-type"/>
</dbReference>
<dbReference type="InterPro" id="IPR036899">
    <property type="entry name" value="Ribosomal_uL13_sf"/>
</dbReference>
<dbReference type="NCBIfam" id="TIGR01066">
    <property type="entry name" value="rplM_bact"/>
    <property type="match status" value="1"/>
</dbReference>
<dbReference type="PANTHER" id="PTHR11545:SF2">
    <property type="entry name" value="LARGE RIBOSOMAL SUBUNIT PROTEIN UL13M"/>
    <property type="match status" value="1"/>
</dbReference>
<dbReference type="PANTHER" id="PTHR11545">
    <property type="entry name" value="RIBOSOMAL PROTEIN L13"/>
    <property type="match status" value="1"/>
</dbReference>
<dbReference type="Pfam" id="PF00572">
    <property type="entry name" value="Ribosomal_L13"/>
    <property type="match status" value="1"/>
</dbReference>
<dbReference type="PIRSF" id="PIRSF002181">
    <property type="entry name" value="Ribosomal_L13"/>
    <property type="match status" value="1"/>
</dbReference>
<dbReference type="SUPFAM" id="SSF52161">
    <property type="entry name" value="Ribosomal protein L13"/>
    <property type="match status" value="1"/>
</dbReference>
<sequence>MTTYSPKVGEVQRNWYVIDAEDIVLGRLATTAANLLRGKHKPQYAPHIDTGDFVVVVNASKIALTGKKATDSLRYDHSGRPGGLRVTSIGEMLAKNPRRAVERAVWGMMPKNKLSRQQLKKLKVYGGPEHPHAAQNPQPYEITQIAQ</sequence>
<keyword id="KW-0002">3D-structure</keyword>
<keyword id="KW-0687">Ribonucleoprotein</keyword>
<keyword id="KW-0689">Ribosomal protein</keyword>